<name>CPPS2_MAIZE</name>
<gene>
    <name evidence="7" type="primary">CPPS2</name>
    <name evidence="5" type="synonym">AN2</name>
    <name evidence="8" type="ORF">ZEAMMB73_Zm00001d029648</name>
</gene>
<organism>
    <name type="scientific">Zea mays</name>
    <name type="common">Maize</name>
    <dbReference type="NCBI Taxonomy" id="4577"/>
    <lineage>
        <taxon>Eukaryota</taxon>
        <taxon>Viridiplantae</taxon>
        <taxon>Streptophyta</taxon>
        <taxon>Embryophyta</taxon>
        <taxon>Tracheophyta</taxon>
        <taxon>Spermatophyta</taxon>
        <taxon>Magnoliopsida</taxon>
        <taxon>Liliopsida</taxon>
        <taxon>Poales</taxon>
        <taxon>Poaceae</taxon>
        <taxon>PACMAD clade</taxon>
        <taxon>Panicoideae</taxon>
        <taxon>Andropogonodae</taxon>
        <taxon>Andropogoneae</taxon>
        <taxon>Tripsacinae</taxon>
        <taxon>Zea</taxon>
    </lineage>
</organism>
<evidence type="ECO:0000250" key="1">
    <source>
        <dbReference type="UniProtKB" id="Q38802"/>
    </source>
</evidence>
<evidence type="ECO:0000255" key="2"/>
<evidence type="ECO:0000269" key="3">
    <source>
    </source>
</evidence>
<evidence type="ECO:0000269" key="4">
    <source>
    </source>
</evidence>
<evidence type="ECO:0000303" key="5">
    <source>
    </source>
</evidence>
<evidence type="ECO:0000303" key="6">
    <source>
    </source>
</evidence>
<evidence type="ECO:0000305" key="7"/>
<evidence type="ECO:0000312" key="8">
    <source>
        <dbReference type="EMBL" id="ONL99283.1"/>
    </source>
</evidence>
<protein>
    <recommendedName>
        <fullName evidence="7">Ent-copalyl diphosphate synthase 2, chloroplastic</fullName>
        <shortName evidence="5">Ent-CPP synthase 2</shortName>
        <shortName evidence="5">Ent-CPS 2</shortName>
        <ecNumber evidence="3 4">5.5.1.13</ecNumber>
    </recommendedName>
    <alternativeName>
        <fullName evidence="7">Protein ANTHER EAR 2</fullName>
        <shortName evidence="6">ZmAN2</shortName>
    </alternativeName>
</protein>
<keyword id="KW-0150">Chloroplast</keyword>
<keyword id="KW-0413">Isomerase</keyword>
<keyword id="KW-0460">Magnesium</keyword>
<keyword id="KW-0479">Metal-binding</keyword>
<keyword id="KW-0611">Plant defense</keyword>
<keyword id="KW-0934">Plastid</keyword>
<keyword id="KW-1185">Reference proteome</keyword>
<keyword id="KW-0809">Transit peptide</keyword>
<accession>A0A1D6K6U5</accession>
<accession>Q672R4</accession>
<feature type="transit peptide" description="Chloroplast" evidence="2">
    <location>
        <begin position="1"/>
        <end position="70"/>
    </location>
</feature>
<feature type="chain" id="PRO_0000447770" description="Ent-copalyl diphosphate synthase 2, chloroplastic">
    <location>
        <begin position="71"/>
        <end position="825"/>
    </location>
</feature>
<feature type="short sequence motif" description="DXDD motif" evidence="7">
    <location>
        <begin position="373"/>
        <end position="376"/>
    </location>
</feature>
<feature type="binding site" evidence="1">
    <location>
        <position position="241"/>
    </location>
    <ligand>
        <name>substrate</name>
    </ligand>
</feature>
<feature type="binding site" evidence="1">
    <location>
        <position position="459"/>
    </location>
    <ligand>
        <name>substrate</name>
    </ligand>
</feature>
<feature type="sequence conflict" description="In Ref. 1; AAT70083/AAT70084." evidence="7" ref="1">
    <original>A</original>
    <variation>T</variation>
    <location>
        <position position="34"/>
    </location>
</feature>
<feature type="sequence conflict" description="In Ref. 1; AAT70083/AAT70084." evidence="7" ref="1">
    <original>R</original>
    <variation>RR</variation>
    <location>
        <position position="45"/>
    </location>
</feature>
<feature type="sequence conflict" description="In Ref. 1; AAT70083/AAT70084." evidence="7" ref="1">
    <original>R</original>
    <variation>L</variation>
    <location>
        <position position="47"/>
    </location>
</feature>
<feature type="sequence conflict" description="In Ref. 1; AAT70083/AAT70084." evidence="7" ref="1">
    <original>D</original>
    <variation>H</variation>
    <location>
        <position position="52"/>
    </location>
</feature>
<feature type="sequence conflict" description="In Ref. 1; AAT70083/AAT70084." evidence="7" ref="1">
    <original>A</original>
    <variation>G</variation>
    <location>
        <position position="233"/>
    </location>
</feature>
<feature type="sequence conflict" description="In Ref. 1; AAT70083/AAT70084." evidence="7" ref="1">
    <original>V</original>
    <variation>M</variation>
    <location>
        <position position="242"/>
    </location>
</feature>
<feature type="sequence conflict" description="In Ref. 1; AAT70083/AAT70084." evidence="7" ref="1">
    <original>R</original>
    <variation>K</variation>
    <location>
        <position position="271"/>
    </location>
</feature>
<feature type="sequence conflict" description="In Ref. 1; AAT70083/AAT70084." evidence="7" ref="1">
    <original>P</original>
    <variation>A</variation>
    <location>
        <position position="441"/>
    </location>
</feature>
<feature type="sequence conflict" description="In Ref. 1; AAT70083/AAT70084." evidence="7" ref="1">
    <original>Q</original>
    <variation>E</variation>
    <location>
        <position position="451"/>
    </location>
</feature>
<feature type="sequence conflict" description="In Ref. 1; AAT70083/AAT70084." evidence="7" ref="1">
    <original>K</original>
    <variation>R</variation>
    <location>
        <position position="541"/>
    </location>
</feature>
<feature type="sequence conflict" description="In Ref. 1; AAT70083/AAT70084." evidence="7" ref="1">
    <original>D</original>
    <variation>DI</variation>
    <location>
        <position position="657"/>
    </location>
</feature>
<dbReference type="EC" id="5.5.1.13" evidence="3 4"/>
<dbReference type="EMBL" id="AY562490">
    <property type="protein sequence ID" value="AAT70083.1"/>
    <property type="molecule type" value="Genomic_DNA"/>
</dbReference>
<dbReference type="EMBL" id="AY562491">
    <property type="protein sequence ID" value="AAT70084.1"/>
    <property type="molecule type" value="mRNA"/>
</dbReference>
<dbReference type="EMBL" id="CM007647">
    <property type="protein sequence ID" value="ONL99283.1"/>
    <property type="molecule type" value="Genomic_DNA"/>
</dbReference>
<dbReference type="RefSeq" id="NP_001105257.2">
    <property type="nucleotide sequence ID" value="NM_001111787.2"/>
</dbReference>
<dbReference type="SMR" id="A0A1D6K6U5"/>
<dbReference type="STRING" id="4577.A0A1D6K6U5"/>
<dbReference type="PaxDb" id="4577-GRMZM2G044481_P01"/>
<dbReference type="GeneID" id="542165"/>
<dbReference type="KEGG" id="zma:542165"/>
<dbReference type="MaizeGDB" id="85297"/>
<dbReference type="eggNOG" id="ENOG502QQN6">
    <property type="taxonomic scope" value="Eukaryota"/>
</dbReference>
<dbReference type="InParanoid" id="A0A1D6K6U5"/>
<dbReference type="OrthoDB" id="2343925at2759"/>
<dbReference type="UniPathway" id="UPA00390"/>
<dbReference type="Proteomes" id="UP000007305">
    <property type="component" value="Unplaced"/>
</dbReference>
<dbReference type="ExpressionAtlas" id="A0A1D6K6U5">
    <property type="expression patterns" value="baseline and differential"/>
</dbReference>
<dbReference type="GO" id="GO:0009507">
    <property type="term" value="C:chloroplast"/>
    <property type="evidence" value="ECO:0000318"/>
    <property type="project" value="GO_Central"/>
</dbReference>
<dbReference type="GO" id="GO:0009905">
    <property type="term" value="F:ent-copalyl diphosphate synthase activity"/>
    <property type="evidence" value="ECO:0007669"/>
    <property type="project" value="UniProtKB-EC"/>
</dbReference>
<dbReference type="GO" id="GO:0016853">
    <property type="term" value="F:isomerase activity"/>
    <property type="evidence" value="ECO:0000315"/>
    <property type="project" value="UniProtKB"/>
</dbReference>
<dbReference type="GO" id="GO:0000287">
    <property type="term" value="F:magnesium ion binding"/>
    <property type="evidence" value="ECO:0000318"/>
    <property type="project" value="GO_Central"/>
</dbReference>
<dbReference type="GO" id="GO:0010333">
    <property type="term" value="F:terpene synthase activity"/>
    <property type="evidence" value="ECO:0000314"/>
    <property type="project" value="UniProtKB"/>
</dbReference>
<dbReference type="GO" id="GO:0006952">
    <property type="term" value="P:defense response"/>
    <property type="evidence" value="ECO:0007669"/>
    <property type="project" value="UniProtKB-KW"/>
</dbReference>
<dbReference type="GO" id="GO:0051502">
    <property type="term" value="P:diterpene phytoalexin biosynthetic process"/>
    <property type="evidence" value="ECO:0000314"/>
    <property type="project" value="UniProtKB"/>
</dbReference>
<dbReference type="GO" id="GO:0016102">
    <property type="term" value="P:diterpenoid biosynthetic process"/>
    <property type="evidence" value="ECO:0000314"/>
    <property type="project" value="UniProtKB"/>
</dbReference>
<dbReference type="GO" id="GO:0009686">
    <property type="term" value="P:gibberellin biosynthetic process"/>
    <property type="evidence" value="ECO:0000315"/>
    <property type="project" value="UniProtKB"/>
</dbReference>
<dbReference type="FunFam" id="1.10.600.10:FF:000024">
    <property type="entry name" value="Ent-copalyl diphosphate synthase"/>
    <property type="match status" value="1"/>
</dbReference>
<dbReference type="FunFam" id="1.50.10.160:FF:000001">
    <property type="entry name" value="Ent-copalyl diphosphate synthase"/>
    <property type="match status" value="1"/>
</dbReference>
<dbReference type="FunFam" id="1.50.10.130:FF:000002">
    <property type="entry name" value="Ent-copalyl diphosphate synthase, chloroplastic"/>
    <property type="match status" value="1"/>
</dbReference>
<dbReference type="Gene3D" id="1.50.10.160">
    <property type="match status" value="1"/>
</dbReference>
<dbReference type="Gene3D" id="1.10.600.10">
    <property type="entry name" value="Farnesyl Diphosphate Synthase"/>
    <property type="match status" value="1"/>
</dbReference>
<dbReference type="Gene3D" id="1.50.10.130">
    <property type="entry name" value="Terpene synthase, N-terminal domain"/>
    <property type="match status" value="1"/>
</dbReference>
<dbReference type="InterPro" id="IPR008949">
    <property type="entry name" value="Isoprenoid_synthase_dom_sf"/>
</dbReference>
<dbReference type="InterPro" id="IPR001906">
    <property type="entry name" value="Terpene_synth_N"/>
</dbReference>
<dbReference type="InterPro" id="IPR036965">
    <property type="entry name" value="Terpene_synth_N_sf"/>
</dbReference>
<dbReference type="InterPro" id="IPR050148">
    <property type="entry name" value="Terpene_synthase-like"/>
</dbReference>
<dbReference type="InterPro" id="IPR008930">
    <property type="entry name" value="Terpenoid_cyclase/PrenylTrfase"/>
</dbReference>
<dbReference type="PANTHER" id="PTHR31739:SF31">
    <property type="entry name" value="ENT-COPALYL DIPHOSPHATE SYNTHASE 1, CHLOROPLASTIC"/>
    <property type="match status" value="1"/>
</dbReference>
<dbReference type="PANTHER" id="PTHR31739">
    <property type="entry name" value="ENT-COPALYL DIPHOSPHATE SYNTHASE, CHLOROPLASTIC"/>
    <property type="match status" value="1"/>
</dbReference>
<dbReference type="Pfam" id="PF01397">
    <property type="entry name" value="Terpene_synth"/>
    <property type="match status" value="1"/>
</dbReference>
<dbReference type="SFLD" id="SFLDG01014">
    <property type="entry name" value="Terpene_Cyclase_Like_1_N-term"/>
    <property type="match status" value="1"/>
</dbReference>
<dbReference type="SUPFAM" id="SSF48239">
    <property type="entry name" value="Terpenoid cyclases/Protein prenyltransferases"/>
    <property type="match status" value="2"/>
</dbReference>
<dbReference type="SUPFAM" id="SSF48576">
    <property type="entry name" value="Terpenoid synthases"/>
    <property type="match status" value="1"/>
</dbReference>
<proteinExistence type="evidence at protein level"/>
<sequence>MVLSSSCTTVPHLSSLAVVQLGPWSSRIKKKTDAVAVPAAAGRWRARARAQDTSESAAVAKGSSLTPIVRTDAESRRTRWPTDDDDAEPLVDEIRAMLTSMSDGDISVSAYDTAWVGLVPRLDGGEGPQFPAAVRWIRNNQLPDGSWGDAALFSAYDRLINTLACVVTLTRWSLEPEMRGRGLSFLGRNMWKLATEDEESMPIGFELAFPSLIELAKSLGVHDFPYDHQALQAIYSSREIKVKRIPKEVMHTVPTSILHSLEGMPGLDWARLLKLQSSDGSFLFSPAATAYALMNTGDDRCFSYIDRTVKKFNGGVPNVYPVDLFEHIWAVDRLERLGISRYFQKEIEQCMDYVNRHWTEDGICWARNSDVKEVDDTAMAFRLLRLHGYSVSPDVFKNFEKDGEFFAFVGQSNQAVTGMYNLNRASQISFPGEDVLHRAGPFSYEFLRRKQAEGALRDKWIISKDLPGEVVYTLDFPWYGNLPRVEARDYLEQYGGGDDVWIGKTLYRMPLVNNDVYLELARMDFNHCQALHQLEWQGLKKWYTENRLMDFGVAQEDALRAYFLAAASVYEPCRAAERLAWARAAILANAVSTHLRNSPSFRERLEHSLRCRPSEETDGSWFNSSSGSDAVLVKAVLRLTDSLAREAQPIHGGDPEDIHKLLRSAWAEWVREKADAADSVCNGSSAVEQEGSRMVHDKQTCLLLARMIEISAGRAAGEAASEDGDRRIIQLTGSICDSLKQKMLVSQDPEKNEEMMSHVDDELKLRIREFVQYLLRLGEKKTGSSETRQTFLSIVKSCYYAAHCPPHVVDRHISRVIFEPVSAAK</sequence>
<reference key="1">
    <citation type="journal article" date="2005" name="Plant Mol. Biol.">
        <title>The maize An2 gene is induced by Fusarium attack and encodes an ent-copalyl diphosphate synthase.</title>
        <authorList>
            <person name="Harris L.J."/>
            <person name="Saparno A."/>
            <person name="Johnston A."/>
            <person name="Prisic S."/>
            <person name="Xu M."/>
            <person name="Allard S."/>
            <person name="Kathiresan A."/>
            <person name="Ouellet T."/>
            <person name="Peters R.J."/>
        </authorList>
    </citation>
    <scope>NUCLEOTIDE SEQUENCE [GENOMIC DNA / MRNA]</scope>
    <scope>FUNCTION</scope>
    <scope>CATALYTIC ACTIVITY</scope>
    <scope>TISSUE SPECIFICITY</scope>
    <scope>INDUCTION</scope>
</reference>
<reference key="2">
    <citation type="journal article" date="2009" name="Science">
        <title>The B73 maize genome: complexity, diversity, and dynamics.</title>
        <authorList>
            <person name="Schnable P.S."/>
            <person name="Ware D."/>
            <person name="Fulton R.S."/>
            <person name="Stein J.C."/>
            <person name="Wei F."/>
            <person name="Pasternak S."/>
            <person name="Liang C."/>
            <person name="Zhang J."/>
            <person name="Fulton L."/>
            <person name="Graves T.A."/>
            <person name="Minx P."/>
            <person name="Reily A.D."/>
            <person name="Courtney L."/>
            <person name="Kruchowski S.S."/>
            <person name="Tomlinson C."/>
            <person name="Strong C."/>
            <person name="Delehaunty K."/>
            <person name="Fronick C."/>
            <person name="Courtney B."/>
            <person name="Rock S.M."/>
            <person name="Belter E."/>
            <person name="Du F."/>
            <person name="Kim K."/>
            <person name="Abbott R.M."/>
            <person name="Cotton M."/>
            <person name="Levy A."/>
            <person name="Marchetto P."/>
            <person name="Ochoa K."/>
            <person name="Jackson S.M."/>
            <person name="Gillam B."/>
            <person name="Chen W."/>
            <person name="Yan L."/>
            <person name="Higginbotham J."/>
            <person name="Cardenas M."/>
            <person name="Waligorski J."/>
            <person name="Applebaum E."/>
            <person name="Phelps L."/>
            <person name="Falcone J."/>
            <person name="Kanchi K."/>
            <person name="Thane T."/>
            <person name="Scimone A."/>
            <person name="Thane N."/>
            <person name="Henke J."/>
            <person name="Wang T."/>
            <person name="Ruppert J."/>
            <person name="Shah N."/>
            <person name="Rotter K."/>
            <person name="Hodges J."/>
            <person name="Ingenthron E."/>
            <person name="Cordes M."/>
            <person name="Kohlberg S."/>
            <person name="Sgro J."/>
            <person name="Delgado B."/>
            <person name="Mead K."/>
            <person name="Chinwalla A."/>
            <person name="Leonard S."/>
            <person name="Crouse K."/>
            <person name="Collura K."/>
            <person name="Kudrna D."/>
            <person name="Currie J."/>
            <person name="He R."/>
            <person name="Angelova A."/>
            <person name="Rajasekar S."/>
            <person name="Mueller T."/>
            <person name="Lomeli R."/>
            <person name="Scara G."/>
            <person name="Ko A."/>
            <person name="Delaney K."/>
            <person name="Wissotski M."/>
            <person name="Lopez G."/>
            <person name="Campos D."/>
            <person name="Braidotti M."/>
            <person name="Ashley E."/>
            <person name="Golser W."/>
            <person name="Kim H."/>
            <person name="Lee S."/>
            <person name="Lin J."/>
            <person name="Dujmic Z."/>
            <person name="Kim W."/>
            <person name="Talag J."/>
            <person name="Zuccolo A."/>
            <person name="Fan C."/>
            <person name="Sebastian A."/>
            <person name="Kramer M."/>
            <person name="Spiegel L."/>
            <person name="Nascimento L."/>
            <person name="Zutavern T."/>
            <person name="Miller B."/>
            <person name="Ambroise C."/>
            <person name="Muller S."/>
            <person name="Spooner W."/>
            <person name="Narechania A."/>
            <person name="Ren L."/>
            <person name="Wei S."/>
            <person name="Kumari S."/>
            <person name="Faga B."/>
            <person name="Levy M.J."/>
            <person name="McMahan L."/>
            <person name="Van Buren P."/>
            <person name="Vaughn M.W."/>
            <person name="Ying K."/>
            <person name="Yeh C.-T."/>
            <person name="Emrich S.J."/>
            <person name="Jia Y."/>
            <person name="Kalyanaraman A."/>
            <person name="Hsia A.-P."/>
            <person name="Barbazuk W.B."/>
            <person name="Baucom R.S."/>
            <person name="Brutnell T.P."/>
            <person name="Carpita N.C."/>
            <person name="Chaparro C."/>
            <person name="Chia J.-M."/>
            <person name="Deragon J.-M."/>
            <person name="Estill J.C."/>
            <person name="Fu Y."/>
            <person name="Jeddeloh J.A."/>
            <person name="Han Y."/>
            <person name="Lee H."/>
            <person name="Li P."/>
            <person name="Lisch D.R."/>
            <person name="Liu S."/>
            <person name="Liu Z."/>
            <person name="Nagel D.H."/>
            <person name="McCann M.C."/>
            <person name="SanMiguel P."/>
            <person name="Myers A.M."/>
            <person name="Nettleton D."/>
            <person name="Nguyen J."/>
            <person name="Penning B.W."/>
            <person name="Ponnala L."/>
            <person name="Schneider K.L."/>
            <person name="Schwartz D.C."/>
            <person name="Sharma A."/>
            <person name="Soderlund C."/>
            <person name="Springer N.M."/>
            <person name="Sun Q."/>
            <person name="Wang H."/>
            <person name="Waterman M."/>
            <person name="Westerman R."/>
            <person name="Wolfgruber T.K."/>
            <person name="Yang L."/>
            <person name="Yu Y."/>
            <person name="Zhang L."/>
            <person name="Zhou S."/>
            <person name="Zhu Q."/>
            <person name="Bennetzen J.L."/>
            <person name="Dawe R.K."/>
            <person name="Jiang J."/>
            <person name="Jiang N."/>
            <person name="Presting G.G."/>
            <person name="Wessler S.R."/>
            <person name="Aluru S."/>
            <person name="Martienssen R.A."/>
            <person name="Clifton S.W."/>
            <person name="McCombie W.R."/>
            <person name="Wing R.A."/>
            <person name="Wilson R.K."/>
        </authorList>
    </citation>
    <scope>NUCLEOTIDE SEQUENCE [LARGE SCALE GENOMIC DNA]</scope>
    <source>
        <strain>cv. B73</strain>
    </source>
</reference>
<reference key="3">
    <citation type="journal article" date="2018" name="Plant Physiol.">
        <title>Discovery, biosynthesis and stress-related accumulation of dolabradiene-derived defenses in maize.</title>
        <authorList>
            <person name="Mafu S."/>
            <person name="Ding Y."/>
            <person name="Murphy K.M."/>
            <person name="Yaacoobi O."/>
            <person name="Addison J.B."/>
            <person name="Wang Q."/>
            <person name="Shen Z."/>
            <person name="Briggs S.P."/>
            <person name="Bohlmann J."/>
            <person name="Castro-Falcon G."/>
            <person name="Hughes C.C."/>
            <person name="Betsiashvili M."/>
            <person name="Huffaker A."/>
            <person name="Schmelz E.A."/>
            <person name="Zerbe P."/>
        </authorList>
    </citation>
    <scope>FUNCTION</scope>
    <scope>CATALYTIC ACTIVITY</scope>
</reference>
<comment type="function">
    <text evidence="3 4">Involved in gibberellin biosynthesis (PubMed:16307364). Catalyzes the conversion of geranylgeranyl diphosphate to the gibberellin precursor ent-copalyl diphosphate (ent-CPP) (PubMed:16307364). Involved in the production of antifungal dolabralexin phytoalexins in response to biotic and abiotic stresses (PubMed:29475898). In response to fungal infection and in associtation with KSL4, is involved in the production dolabradiene, a type of antifungal phytoalexin (PubMed:29475898).</text>
</comment>
<comment type="catalytic activity">
    <reaction evidence="3 4">
        <text>(2E,6E,10E)-geranylgeranyl diphosphate = ent-copalyl diphosphate</text>
        <dbReference type="Rhea" id="RHEA:14841"/>
        <dbReference type="ChEBI" id="CHEBI:58553"/>
        <dbReference type="ChEBI" id="CHEBI:58756"/>
        <dbReference type="EC" id="5.5.1.13"/>
    </reaction>
    <physiologicalReaction direction="left-to-right" evidence="3 4">
        <dbReference type="Rhea" id="RHEA:14842"/>
    </physiologicalReaction>
</comment>
<comment type="cofactor">
    <cofactor evidence="1">
        <name>Mg(2+)</name>
        <dbReference type="ChEBI" id="CHEBI:18420"/>
    </cofactor>
</comment>
<comment type="pathway">
    <text evidence="7">Plant hormone biosynthesis; gibberellin biosynthesis.</text>
</comment>
<comment type="subcellular location">
    <subcellularLocation>
        <location evidence="2">Plastid</location>
        <location evidence="2">Chloroplast</location>
    </subcellularLocation>
</comment>
<comment type="tissue specificity">
    <text evidence="3">Expressed in tassels.</text>
</comment>
<comment type="induction">
    <text evidence="3">Induced by the fungal pathogens Fusarium graminearum and Fusarium verticillioides.</text>
</comment>
<comment type="domain">
    <text evidence="7">The Asp-Xaa-Asp-Asp (DXDD) motif is important for the catalytic activity through binding to Mg(2+).</text>
</comment>
<comment type="similarity">
    <text evidence="7">Belongs to the terpene synthase family. Tpsc subfamily.</text>
</comment>